<name>DNAK_XYLFM</name>
<proteinExistence type="inferred from homology"/>
<gene>
    <name evidence="1" type="primary">dnaK</name>
    <name type="ordered locus">Xfasm12_1512</name>
</gene>
<reference key="1">
    <citation type="journal article" date="2010" name="J. Bacteriol.">
        <title>Whole genome sequences of two Xylella fastidiosa strains (M12 and M23) causing almond leaf scorch disease in California.</title>
        <authorList>
            <person name="Chen J."/>
            <person name="Xie G."/>
            <person name="Han S."/>
            <person name="Chertkov O."/>
            <person name="Sims D."/>
            <person name="Civerolo E.L."/>
        </authorList>
    </citation>
    <scope>NUCLEOTIDE SEQUENCE [LARGE SCALE GENOMIC DNA]</scope>
    <source>
        <strain>M12</strain>
    </source>
</reference>
<keyword id="KW-0067">ATP-binding</keyword>
<keyword id="KW-0143">Chaperone</keyword>
<keyword id="KW-0547">Nucleotide-binding</keyword>
<keyword id="KW-0597">Phosphoprotein</keyword>
<keyword id="KW-0346">Stress response</keyword>
<evidence type="ECO:0000255" key="1">
    <source>
        <dbReference type="HAMAP-Rule" id="MF_00332"/>
    </source>
</evidence>
<evidence type="ECO:0000256" key="2">
    <source>
        <dbReference type="SAM" id="MobiDB-lite"/>
    </source>
</evidence>
<accession>B0U3J8</accession>
<dbReference type="EMBL" id="CP000941">
    <property type="protein sequence ID" value="ACA12427.1"/>
    <property type="molecule type" value="Genomic_DNA"/>
</dbReference>
<dbReference type="RefSeq" id="WP_004085852.1">
    <property type="nucleotide sequence ID" value="NC_010513.1"/>
</dbReference>
<dbReference type="SMR" id="B0U3J8"/>
<dbReference type="KEGG" id="xfm:Xfasm12_1512"/>
<dbReference type="HOGENOM" id="CLU_005965_2_1_6"/>
<dbReference type="GO" id="GO:0005524">
    <property type="term" value="F:ATP binding"/>
    <property type="evidence" value="ECO:0007669"/>
    <property type="project" value="UniProtKB-UniRule"/>
</dbReference>
<dbReference type="GO" id="GO:0140662">
    <property type="term" value="F:ATP-dependent protein folding chaperone"/>
    <property type="evidence" value="ECO:0007669"/>
    <property type="project" value="InterPro"/>
</dbReference>
<dbReference type="GO" id="GO:0051082">
    <property type="term" value="F:unfolded protein binding"/>
    <property type="evidence" value="ECO:0007669"/>
    <property type="project" value="InterPro"/>
</dbReference>
<dbReference type="CDD" id="cd10234">
    <property type="entry name" value="ASKHA_NBD_HSP70_DnaK-like"/>
    <property type="match status" value="1"/>
</dbReference>
<dbReference type="FunFam" id="2.60.34.10:FF:000014">
    <property type="entry name" value="Chaperone protein DnaK HSP70"/>
    <property type="match status" value="1"/>
</dbReference>
<dbReference type="FunFam" id="3.30.30.30:FF:000003">
    <property type="entry name" value="Heat shock protein 9"/>
    <property type="match status" value="1"/>
</dbReference>
<dbReference type="FunFam" id="1.20.1270.10:FF:000001">
    <property type="entry name" value="Molecular chaperone DnaK"/>
    <property type="match status" value="1"/>
</dbReference>
<dbReference type="FunFam" id="3.30.420.40:FF:000004">
    <property type="entry name" value="Molecular chaperone DnaK"/>
    <property type="match status" value="1"/>
</dbReference>
<dbReference type="FunFam" id="3.90.640.10:FF:000003">
    <property type="entry name" value="Molecular chaperone DnaK"/>
    <property type="match status" value="1"/>
</dbReference>
<dbReference type="Gene3D" id="1.20.1270.10">
    <property type="match status" value="1"/>
</dbReference>
<dbReference type="Gene3D" id="3.30.420.40">
    <property type="match status" value="2"/>
</dbReference>
<dbReference type="Gene3D" id="3.90.640.10">
    <property type="entry name" value="Actin, Chain A, domain 4"/>
    <property type="match status" value="1"/>
</dbReference>
<dbReference type="Gene3D" id="2.60.34.10">
    <property type="entry name" value="Substrate Binding Domain Of DNAk, Chain A, domain 1"/>
    <property type="match status" value="1"/>
</dbReference>
<dbReference type="HAMAP" id="MF_00332">
    <property type="entry name" value="DnaK"/>
    <property type="match status" value="1"/>
</dbReference>
<dbReference type="InterPro" id="IPR043129">
    <property type="entry name" value="ATPase_NBD"/>
</dbReference>
<dbReference type="InterPro" id="IPR012725">
    <property type="entry name" value="Chaperone_DnaK"/>
</dbReference>
<dbReference type="InterPro" id="IPR018181">
    <property type="entry name" value="Heat_shock_70_CS"/>
</dbReference>
<dbReference type="InterPro" id="IPR029048">
    <property type="entry name" value="HSP70_C_sf"/>
</dbReference>
<dbReference type="InterPro" id="IPR029047">
    <property type="entry name" value="HSP70_peptide-bd_sf"/>
</dbReference>
<dbReference type="InterPro" id="IPR013126">
    <property type="entry name" value="Hsp_70_fam"/>
</dbReference>
<dbReference type="NCBIfam" id="NF001413">
    <property type="entry name" value="PRK00290.1"/>
    <property type="match status" value="1"/>
</dbReference>
<dbReference type="NCBIfam" id="NF003520">
    <property type="entry name" value="PRK05183.1"/>
    <property type="match status" value="1"/>
</dbReference>
<dbReference type="NCBIfam" id="TIGR02350">
    <property type="entry name" value="prok_dnaK"/>
    <property type="match status" value="1"/>
</dbReference>
<dbReference type="PANTHER" id="PTHR19375">
    <property type="entry name" value="HEAT SHOCK PROTEIN 70KDA"/>
    <property type="match status" value="1"/>
</dbReference>
<dbReference type="Pfam" id="PF00012">
    <property type="entry name" value="HSP70"/>
    <property type="match status" value="1"/>
</dbReference>
<dbReference type="PRINTS" id="PR00301">
    <property type="entry name" value="HEATSHOCK70"/>
</dbReference>
<dbReference type="SUPFAM" id="SSF53067">
    <property type="entry name" value="Actin-like ATPase domain"/>
    <property type="match status" value="2"/>
</dbReference>
<dbReference type="SUPFAM" id="SSF100920">
    <property type="entry name" value="Heat shock protein 70kD (HSP70), peptide-binding domain"/>
    <property type="match status" value="1"/>
</dbReference>
<dbReference type="PROSITE" id="PS00297">
    <property type="entry name" value="HSP70_1"/>
    <property type="match status" value="1"/>
</dbReference>
<dbReference type="PROSITE" id="PS00329">
    <property type="entry name" value="HSP70_2"/>
    <property type="match status" value="1"/>
</dbReference>
<dbReference type="PROSITE" id="PS01036">
    <property type="entry name" value="HSP70_3"/>
    <property type="match status" value="1"/>
</dbReference>
<feature type="chain" id="PRO_1000119780" description="Chaperone protein DnaK">
    <location>
        <begin position="1"/>
        <end position="638"/>
    </location>
</feature>
<feature type="region of interest" description="Disordered" evidence="2">
    <location>
        <begin position="599"/>
        <end position="623"/>
    </location>
</feature>
<feature type="compositionally biased region" description="Low complexity" evidence="2">
    <location>
        <begin position="609"/>
        <end position="620"/>
    </location>
</feature>
<feature type="modified residue" description="Phosphothreonine; by autocatalysis" evidence="1">
    <location>
        <position position="200"/>
    </location>
</feature>
<organism>
    <name type="scientific">Xylella fastidiosa (strain M12)</name>
    <dbReference type="NCBI Taxonomy" id="405440"/>
    <lineage>
        <taxon>Bacteria</taxon>
        <taxon>Pseudomonadati</taxon>
        <taxon>Pseudomonadota</taxon>
        <taxon>Gammaproteobacteria</taxon>
        <taxon>Lysobacterales</taxon>
        <taxon>Lysobacteraceae</taxon>
        <taxon>Xylella</taxon>
    </lineage>
</organism>
<comment type="function">
    <text evidence="1">Acts as a chaperone.</text>
</comment>
<comment type="induction">
    <text evidence="1">By stress conditions e.g. heat shock.</text>
</comment>
<comment type="similarity">
    <text evidence="1">Belongs to the heat shock protein 70 family.</text>
</comment>
<sequence length="638" mass="68460">MGKIIGIDLGTTNSCLAIIEGGKGRVIENSEGDRTTPSIVAYTKDGEVLVGAAAKRQAVTNPKNTFYAVKRLIGRKFGDAEVQKDLDLVPYKITQHDNGDAWVATADGKKLAPQEISAKVLEKMKKTAEDFLGEKVTEAVITVPAYFNDSQRQATKDAGRIAGLDVKRIINEPTAAALAYGLDKKGGDRKIAVYDLGGGTFDVSIIEIAEVDGEKQFEVLATNGDTFLGGEDFDKRVIDYLVDEFNKDQGIDLRKDPLALQRLKDAAERAKIELSSSQQTEVNLPYITADASGPKHLNIKLTRAKLEALVDDLVRKSIEPCRIALNDAGLRTSDVQEVILVGGQTRMPKVQQAVADFFGKEPRKDVNPDEAVALGAAIQGGVLAGDVKDVLLLDVTPLSLGIETMGGVFTKIIEKNTTIPTKASQVFSTAEDGQSAVTVHVLQGEREQARFNKSLAKFDLAGIEPAPRGQPQIEVSFDIDANGILHVSAKDKKTNKEQKVEVKAGSGLSDSEIQQMVADAEAHREEDKKFQELVQARNHADGLIHSTRSAIKEHGSKVGGELIGRVEASLAELEAAVKGDDKNQIEAKSKTLEEVAQSLHMAATAEQQSASTGAGAGSSAKVDDVVDAEFTEVKGDKK</sequence>
<protein>
    <recommendedName>
        <fullName evidence="1">Chaperone protein DnaK</fullName>
    </recommendedName>
    <alternativeName>
        <fullName evidence="1">HSP70</fullName>
    </alternativeName>
    <alternativeName>
        <fullName evidence="1">Heat shock 70 kDa protein</fullName>
    </alternativeName>
    <alternativeName>
        <fullName evidence="1">Heat shock protein 70</fullName>
    </alternativeName>
</protein>